<keyword id="KW-0007">Acetylation</keyword>
<keyword id="KW-0458">Lysosome</keyword>
<keyword id="KW-0597">Phosphoprotein</keyword>
<keyword id="KW-1185">Reference proteome</keyword>
<keyword id="KW-0677">Repeat</keyword>
<keyword id="KW-0853">WD repeat</keyword>
<name>SHKB1_RAT</name>
<proteinExistence type="evidence at protein level"/>
<comment type="function">
    <text evidence="1">Inhibits CBL-SH3KBP1 complex mediated down-regulation of EGFR signaling by sequestration of SH3KBP1. Binds to SH3KBP1 and prevents its interaction with CBL and inhibits translocation of SH3KBP1 to EGFR containing vesicles upon EGF stimulation.</text>
</comment>
<comment type="subunit">
    <text evidence="2 5">Monomer (By similarity). Interacts with CUL3; interaction is direct and forms a 5:5 heterodecamer (By similarity). Interacts (via PXXXPR motifs) with SH3KBP1 (via SH3 domains) (PubMed:11152963). Directly interacts with cathepsin B/CTSB (By similarity).</text>
</comment>
<comment type="subcellular location">
    <subcellularLocation>
        <location evidence="2">Lysosome</location>
    </subcellularLocation>
</comment>
<comment type="similarity">
    <text evidence="6">Belongs to the KCTD3 family.</text>
</comment>
<organism>
    <name type="scientific">Rattus norvegicus</name>
    <name type="common">Rat</name>
    <dbReference type="NCBI Taxonomy" id="10116"/>
    <lineage>
        <taxon>Eukaryota</taxon>
        <taxon>Metazoa</taxon>
        <taxon>Chordata</taxon>
        <taxon>Craniata</taxon>
        <taxon>Vertebrata</taxon>
        <taxon>Euteleostomi</taxon>
        <taxon>Mammalia</taxon>
        <taxon>Eutheria</taxon>
        <taxon>Euarchontoglires</taxon>
        <taxon>Glires</taxon>
        <taxon>Rodentia</taxon>
        <taxon>Myomorpha</taxon>
        <taxon>Muroidea</taxon>
        <taxon>Muridae</taxon>
        <taxon>Murinae</taxon>
        <taxon>Rattus</taxon>
    </lineage>
</organism>
<dbReference type="EMBL" id="AABR03002621">
    <property type="status" value="NOT_ANNOTATED_CDS"/>
    <property type="molecule type" value="Genomic_DNA"/>
</dbReference>
<dbReference type="EMBL" id="AABR03004899">
    <property type="status" value="NOT_ANNOTATED_CDS"/>
    <property type="molecule type" value="Genomic_DNA"/>
</dbReference>
<dbReference type="RefSeq" id="NP_001258009.1">
    <property type="nucleotide sequence ID" value="NM_001271080.1"/>
</dbReference>
<dbReference type="SMR" id="P0C5J9"/>
<dbReference type="FunCoup" id="P0C5J9">
    <property type="interactions" value="1231"/>
</dbReference>
<dbReference type="STRING" id="10116.ENSRNOP00000028348"/>
<dbReference type="GlyGen" id="P0C5J9">
    <property type="glycosylation" value="1 site"/>
</dbReference>
<dbReference type="PhosphoSitePlus" id="P0C5J9"/>
<dbReference type="PaxDb" id="10116-ENSRNOP00000028348"/>
<dbReference type="Ensembl" id="ENSRNOT00000028348.8">
    <property type="protein sequence ID" value="ENSRNOP00000028348.4"/>
    <property type="gene ID" value="ENSRNOG00000020882.8"/>
</dbReference>
<dbReference type="GeneID" id="292735"/>
<dbReference type="KEGG" id="rno:292735"/>
<dbReference type="UCSC" id="RGD:1309281">
    <property type="organism name" value="rat"/>
</dbReference>
<dbReference type="AGR" id="RGD:1309281"/>
<dbReference type="CTD" id="92799"/>
<dbReference type="RGD" id="1309281">
    <property type="gene designation" value="Shkbp1"/>
</dbReference>
<dbReference type="eggNOG" id="KOG2714">
    <property type="taxonomic scope" value="Eukaryota"/>
</dbReference>
<dbReference type="GeneTree" id="ENSGT00940000153881"/>
<dbReference type="HOGENOM" id="CLU_012214_0_1_1"/>
<dbReference type="InParanoid" id="P0C5J9"/>
<dbReference type="OMA" id="FRTERLH"/>
<dbReference type="OrthoDB" id="39980at9989"/>
<dbReference type="PhylomeDB" id="P0C5J9"/>
<dbReference type="TreeFam" id="TF313754"/>
<dbReference type="PRO" id="PR:P0C5J9"/>
<dbReference type="Proteomes" id="UP000002494">
    <property type="component" value="Chromosome 1"/>
</dbReference>
<dbReference type="Bgee" id="ENSRNOG00000020882">
    <property type="expression patterns" value="Expressed in thymus and 19 other cell types or tissues"/>
</dbReference>
<dbReference type="ExpressionAtlas" id="P0C5J9">
    <property type="expression patterns" value="baseline and differential"/>
</dbReference>
<dbReference type="GO" id="GO:0005764">
    <property type="term" value="C:lysosome"/>
    <property type="evidence" value="ECO:0007669"/>
    <property type="project" value="UniProtKB-SubCell"/>
</dbReference>
<dbReference type="GO" id="GO:0042802">
    <property type="term" value="F:identical protein binding"/>
    <property type="evidence" value="ECO:0000266"/>
    <property type="project" value="RGD"/>
</dbReference>
<dbReference type="GO" id="GO:0045742">
    <property type="term" value="P:positive regulation of epidermal growth factor receptor signaling pathway"/>
    <property type="evidence" value="ECO:0000250"/>
    <property type="project" value="UniProtKB"/>
</dbReference>
<dbReference type="GO" id="GO:0051260">
    <property type="term" value="P:protein homooligomerization"/>
    <property type="evidence" value="ECO:0007669"/>
    <property type="project" value="InterPro"/>
</dbReference>
<dbReference type="CDD" id="cd18393">
    <property type="entry name" value="BTB_POZ_SHKBP1"/>
    <property type="match status" value="1"/>
</dbReference>
<dbReference type="FunFam" id="3.30.710.10:FF:000038">
    <property type="entry name" value="BTB/POZ domain-containing protein KCTD3 isoform X1"/>
    <property type="match status" value="1"/>
</dbReference>
<dbReference type="FunFam" id="2.130.10.10:FF:000439">
    <property type="entry name" value="SH3KBP1 binding protein 1"/>
    <property type="match status" value="1"/>
</dbReference>
<dbReference type="Gene3D" id="3.30.710.10">
    <property type="entry name" value="Potassium Channel Kv1.1, Chain A"/>
    <property type="match status" value="1"/>
</dbReference>
<dbReference type="Gene3D" id="2.130.10.10">
    <property type="entry name" value="YVTN repeat-like/Quinoprotein amine dehydrogenase"/>
    <property type="match status" value="1"/>
</dbReference>
<dbReference type="InterPro" id="IPR000210">
    <property type="entry name" value="BTB/POZ_dom"/>
</dbReference>
<dbReference type="InterPro" id="IPR047876">
    <property type="entry name" value="SHKBP1/KCTD3"/>
</dbReference>
<dbReference type="InterPro" id="IPR047825">
    <property type="entry name" value="SHKBP1_KCTD3_BTB_POZ"/>
</dbReference>
<dbReference type="InterPro" id="IPR011333">
    <property type="entry name" value="SKP1/BTB/POZ_sf"/>
</dbReference>
<dbReference type="InterPro" id="IPR003131">
    <property type="entry name" value="T1-type_BTB"/>
</dbReference>
<dbReference type="InterPro" id="IPR015943">
    <property type="entry name" value="WD40/YVTN_repeat-like_dom_sf"/>
</dbReference>
<dbReference type="InterPro" id="IPR036322">
    <property type="entry name" value="WD40_repeat_dom_sf"/>
</dbReference>
<dbReference type="PANTHER" id="PTHR15859">
    <property type="entry name" value="SETA BINDING PROTEIN 1"/>
    <property type="match status" value="1"/>
</dbReference>
<dbReference type="PANTHER" id="PTHR15859:SF5">
    <property type="entry name" value="SH3KBP1-BINDING PROTEIN 1"/>
    <property type="match status" value="1"/>
</dbReference>
<dbReference type="Pfam" id="PF02214">
    <property type="entry name" value="BTB_2"/>
    <property type="match status" value="1"/>
</dbReference>
<dbReference type="SMART" id="SM00225">
    <property type="entry name" value="BTB"/>
    <property type="match status" value="1"/>
</dbReference>
<dbReference type="SUPFAM" id="SSF54695">
    <property type="entry name" value="POZ domain"/>
    <property type="match status" value="1"/>
</dbReference>
<dbReference type="SUPFAM" id="SSF50978">
    <property type="entry name" value="WD40 repeat-like"/>
    <property type="match status" value="1"/>
</dbReference>
<dbReference type="PROSITE" id="PS50097">
    <property type="entry name" value="BTB"/>
    <property type="match status" value="1"/>
</dbReference>
<dbReference type="PROSITE" id="PS00678">
    <property type="entry name" value="WD_REPEATS_1"/>
    <property type="match status" value="1"/>
</dbReference>
<reference key="1">
    <citation type="journal article" date="2004" name="Nature">
        <title>Genome sequence of the Brown Norway rat yields insights into mammalian evolution.</title>
        <authorList>
            <person name="Gibbs R.A."/>
            <person name="Weinstock G.M."/>
            <person name="Metzker M.L."/>
            <person name="Muzny D.M."/>
            <person name="Sodergren E.J."/>
            <person name="Scherer S."/>
            <person name="Scott G."/>
            <person name="Steffen D."/>
            <person name="Worley K.C."/>
            <person name="Burch P.E."/>
            <person name="Okwuonu G."/>
            <person name="Hines S."/>
            <person name="Lewis L."/>
            <person name="Deramo C."/>
            <person name="Delgado O."/>
            <person name="Dugan-Rocha S."/>
            <person name="Miner G."/>
            <person name="Morgan M."/>
            <person name="Hawes A."/>
            <person name="Gill R."/>
            <person name="Holt R.A."/>
            <person name="Adams M.D."/>
            <person name="Amanatides P.G."/>
            <person name="Baden-Tillson H."/>
            <person name="Barnstead M."/>
            <person name="Chin S."/>
            <person name="Evans C.A."/>
            <person name="Ferriera S."/>
            <person name="Fosler C."/>
            <person name="Glodek A."/>
            <person name="Gu Z."/>
            <person name="Jennings D."/>
            <person name="Kraft C.L."/>
            <person name="Nguyen T."/>
            <person name="Pfannkoch C.M."/>
            <person name="Sitter C."/>
            <person name="Sutton G.G."/>
            <person name="Venter J.C."/>
            <person name="Woodage T."/>
            <person name="Smith D."/>
            <person name="Lee H.-M."/>
            <person name="Gustafson E."/>
            <person name="Cahill P."/>
            <person name="Kana A."/>
            <person name="Doucette-Stamm L."/>
            <person name="Weinstock K."/>
            <person name="Fechtel K."/>
            <person name="Weiss R.B."/>
            <person name="Dunn D.M."/>
            <person name="Green E.D."/>
            <person name="Blakesley R.W."/>
            <person name="Bouffard G.G."/>
            <person name="De Jong P.J."/>
            <person name="Osoegawa K."/>
            <person name="Zhu B."/>
            <person name="Marra M."/>
            <person name="Schein J."/>
            <person name="Bosdet I."/>
            <person name="Fjell C."/>
            <person name="Jones S."/>
            <person name="Krzywinski M."/>
            <person name="Mathewson C."/>
            <person name="Siddiqui A."/>
            <person name="Wye N."/>
            <person name="McPherson J."/>
            <person name="Zhao S."/>
            <person name="Fraser C.M."/>
            <person name="Shetty J."/>
            <person name="Shatsman S."/>
            <person name="Geer K."/>
            <person name="Chen Y."/>
            <person name="Abramzon S."/>
            <person name="Nierman W.C."/>
            <person name="Havlak P.H."/>
            <person name="Chen R."/>
            <person name="Durbin K.J."/>
            <person name="Egan A."/>
            <person name="Ren Y."/>
            <person name="Song X.-Z."/>
            <person name="Li B."/>
            <person name="Liu Y."/>
            <person name="Qin X."/>
            <person name="Cawley S."/>
            <person name="Cooney A.J."/>
            <person name="D'Souza L.M."/>
            <person name="Martin K."/>
            <person name="Wu J.Q."/>
            <person name="Gonzalez-Garay M.L."/>
            <person name="Jackson A.R."/>
            <person name="Kalafus K.J."/>
            <person name="McLeod M.P."/>
            <person name="Milosavljevic A."/>
            <person name="Virk D."/>
            <person name="Volkov A."/>
            <person name="Wheeler D.A."/>
            <person name="Zhang Z."/>
            <person name="Bailey J.A."/>
            <person name="Eichler E.E."/>
            <person name="Tuzun E."/>
            <person name="Birney E."/>
            <person name="Mongin E."/>
            <person name="Ureta-Vidal A."/>
            <person name="Woodwark C."/>
            <person name="Zdobnov E."/>
            <person name="Bork P."/>
            <person name="Suyama M."/>
            <person name="Torrents D."/>
            <person name="Alexandersson M."/>
            <person name="Trask B.J."/>
            <person name="Young J.M."/>
            <person name="Huang H."/>
            <person name="Wang H."/>
            <person name="Xing H."/>
            <person name="Daniels S."/>
            <person name="Gietzen D."/>
            <person name="Schmidt J."/>
            <person name="Stevens K."/>
            <person name="Vitt U."/>
            <person name="Wingrove J."/>
            <person name="Camara F."/>
            <person name="Mar Alba M."/>
            <person name="Abril J.F."/>
            <person name="Guigo R."/>
            <person name="Smit A."/>
            <person name="Dubchak I."/>
            <person name="Rubin E.M."/>
            <person name="Couronne O."/>
            <person name="Poliakov A."/>
            <person name="Huebner N."/>
            <person name="Ganten D."/>
            <person name="Goesele C."/>
            <person name="Hummel O."/>
            <person name="Kreitler T."/>
            <person name="Lee Y.-A."/>
            <person name="Monti J."/>
            <person name="Schulz H."/>
            <person name="Zimdahl H."/>
            <person name="Himmelbauer H."/>
            <person name="Lehrach H."/>
            <person name="Jacob H.J."/>
            <person name="Bromberg S."/>
            <person name="Gullings-Handley J."/>
            <person name="Jensen-Seaman M.I."/>
            <person name="Kwitek A.E."/>
            <person name="Lazar J."/>
            <person name="Pasko D."/>
            <person name="Tonellato P.J."/>
            <person name="Twigger S."/>
            <person name="Ponting C.P."/>
            <person name="Duarte J.M."/>
            <person name="Rice S."/>
            <person name="Goodstadt L."/>
            <person name="Beatson S.A."/>
            <person name="Emes R.D."/>
            <person name="Winter E.E."/>
            <person name="Webber C."/>
            <person name="Brandt P."/>
            <person name="Nyakatura G."/>
            <person name="Adetobi M."/>
            <person name="Chiaromonte F."/>
            <person name="Elnitski L."/>
            <person name="Eswara P."/>
            <person name="Hardison R.C."/>
            <person name="Hou M."/>
            <person name="Kolbe D."/>
            <person name="Makova K."/>
            <person name="Miller W."/>
            <person name="Nekrutenko A."/>
            <person name="Riemer C."/>
            <person name="Schwartz S."/>
            <person name="Taylor J."/>
            <person name="Yang S."/>
            <person name="Zhang Y."/>
            <person name="Lindpaintner K."/>
            <person name="Andrews T.D."/>
            <person name="Caccamo M."/>
            <person name="Clamp M."/>
            <person name="Clarke L."/>
            <person name="Curwen V."/>
            <person name="Durbin R.M."/>
            <person name="Eyras E."/>
            <person name="Searle S.M."/>
            <person name="Cooper G.M."/>
            <person name="Batzoglou S."/>
            <person name="Brudno M."/>
            <person name="Sidow A."/>
            <person name="Stone E.A."/>
            <person name="Payseur B.A."/>
            <person name="Bourque G."/>
            <person name="Lopez-Otin C."/>
            <person name="Puente X.S."/>
            <person name="Chakrabarti K."/>
            <person name="Chatterji S."/>
            <person name="Dewey C."/>
            <person name="Pachter L."/>
            <person name="Bray N."/>
            <person name="Yap V.B."/>
            <person name="Caspi A."/>
            <person name="Tesler G."/>
            <person name="Pevzner P.A."/>
            <person name="Haussler D."/>
            <person name="Roskin K.M."/>
            <person name="Baertsch R."/>
            <person name="Clawson H."/>
            <person name="Furey T.S."/>
            <person name="Hinrichs A.S."/>
            <person name="Karolchik D."/>
            <person name="Kent W.J."/>
            <person name="Rosenbloom K.R."/>
            <person name="Trumbower H."/>
            <person name="Weirauch M."/>
            <person name="Cooper D.N."/>
            <person name="Stenson P.D."/>
            <person name="Ma B."/>
            <person name="Brent M."/>
            <person name="Arumugam M."/>
            <person name="Shteynberg D."/>
            <person name="Copley R.R."/>
            <person name="Taylor M.S."/>
            <person name="Riethman H."/>
            <person name="Mudunuri U."/>
            <person name="Peterson J."/>
            <person name="Guyer M."/>
            <person name="Felsenfeld A."/>
            <person name="Old S."/>
            <person name="Mockrin S."/>
            <person name="Collins F.S."/>
        </authorList>
    </citation>
    <scope>NUCLEOTIDE SEQUENCE [LARGE SCALE GENOMIC DNA]</scope>
    <source>
        <strain>Brown Norway</strain>
    </source>
</reference>
<reference key="2">
    <citation type="journal article" date="2000" name="Cell. Signal.">
        <title>SETA is a multifunctional adapter protein with three SH3 domains that binds Grb2, Cbl, and the novel SB1 proteins.</title>
        <authorList>
            <person name="Borinstein S.C."/>
            <person name="Hyatt M.A."/>
            <person name="Sykes V.W."/>
            <person name="Straub R.E."/>
            <person name="Lipkowitz S."/>
            <person name="Boulter J."/>
            <person name="Boegler O."/>
        </authorList>
    </citation>
    <scope>INTERACTION WITH SH3KBP1</scope>
</reference>
<gene>
    <name type="primary">Shkbp1</name>
    <name type="synonym">Sb1</name>
</gene>
<evidence type="ECO:0000250" key="1">
    <source>
        <dbReference type="UniProtKB" id="Q6P7W2"/>
    </source>
</evidence>
<evidence type="ECO:0000250" key="2">
    <source>
        <dbReference type="UniProtKB" id="Q8TBC3"/>
    </source>
</evidence>
<evidence type="ECO:0000255" key="3">
    <source>
        <dbReference type="PROSITE-ProRule" id="PRU00037"/>
    </source>
</evidence>
<evidence type="ECO:0000256" key="4">
    <source>
        <dbReference type="SAM" id="MobiDB-lite"/>
    </source>
</evidence>
<evidence type="ECO:0000269" key="5">
    <source>
    </source>
</evidence>
<evidence type="ECO:0000305" key="6"/>
<protein>
    <recommendedName>
        <fullName>SH3KBP1-binding protein 1</fullName>
    </recommendedName>
    <alternativeName>
        <fullName>SETA-binding protein 1</fullName>
    </alternativeName>
</protein>
<sequence length="704" mass="75972">MAVPTTAVEGVRSRGAPGEVIHLNVGGKRFSTSRQTLTWIPDSFFSSLLSGRISTLKDETGAIFIDRDPTVFAPILNFLRTKELDPRGVHGSSLLHEAQFYGLTPLVRRLQVREELDRSSCGNVLFNGYLPPPVFPVKRRNRHSLVGPQQIGGRPAPVRRSNTMPPNLGNAGLLGRMLDDRAPPSPSGQPEEPGMVRLVCGHHNWIAVAYTHFLVCYRLKEASGWQLAFSSPRLDWPIERLALTARVLGGAPGEHDKMVAAATGSEILLWALQAQGGGSEIGVFHLGVPVEALFFVGNQLIATSHTGRIGVWNAVTKHWQVQEVQPITSYDAAGSFLLLGCSNGSIYYVDVQKFPLRMKDNDLLVSELYRDPAEDGVTALSVYLTPKTSDSGNWIEIAYGTSSGVVRVIVQHPETVGSGPQLFQTFSVHRSPVTKIMLSEKHLISVCADNNHVRTWSVTRFRGMISTQPGSTPLASFKILALESADGLGGCSAGNDIGPYGERDDQQVFIQKVVPNASQLFVRLSSTGQRVCSVRSVDGSATTAFTVLECEGSRRLGSRPRRYLLTGQANGSLAMWDLTTAMDGLGQTPAGGLTEEELMDQLEQCELSPLTSSRASFPSPSPRTSLTSLHSASSNTSLCGHRGSPSPPQAGARSRGAGSFVDRFKELARGAPELRGPPTPAPRPSTSLGNPLILPKNTLNETSF</sequence>
<feature type="initiator methionine" description="Removed" evidence="2">
    <location>
        <position position="1"/>
    </location>
</feature>
<feature type="chain" id="PRO_0000307934" description="SH3KBP1-binding protein 1">
    <location>
        <begin position="2"/>
        <end position="704"/>
    </location>
</feature>
<feature type="domain" description="BTB" evidence="3">
    <location>
        <begin position="19"/>
        <end position="88"/>
    </location>
</feature>
<feature type="repeat" description="WD 1">
    <location>
        <begin position="233"/>
        <end position="280"/>
    </location>
</feature>
<feature type="repeat" description="WD 2">
    <location>
        <begin position="283"/>
        <end position="322"/>
    </location>
</feature>
<feature type="repeat" description="WD 3">
    <location>
        <begin position="324"/>
        <end position="359"/>
    </location>
</feature>
<feature type="repeat" description="WD 4">
    <location>
        <begin position="428"/>
        <end position="466"/>
    </location>
</feature>
<feature type="repeat" description="WD 5">
    <location>
        <begin position="548"/>
        <end position="586"/>
    </location>
</feature>
<feature type="region of interest" description="Disordered" evidence="4">
    <location>
        <begin position="146"/>
        <end position="165"/>
    </location>
</feature>
<feature type="region of interest" description="Disordered" evidence="4">
    <location>
        <begin position="609"/>
        <end position="704"/>
    </location>
</feature>
<feature type="short sequence motif" description="PXXXPR" evidence="6">
    <location>
        <begin position="618"/>
        <end position="623"/>
    </location>
</feature>
<feature type="short sequence motif" description="PXXXPR" evidence="6">
    <location>
        <begin position="678"/>
        <end position="683"/>
    </location>
</feature>
<feature type="compositionally biased region" description="Low complexity" evidence="4">
    <location>
        <begin position="611"/>
        <end position="631"/>
    </location>
</feature>
<feature type="modified residue" description="N-acetylalanine" evidence="2">
    <location>
        <position position="2"/>
    </location>
</feature>
<feature type="modified residue" description="Phosphothreonine" evidence="2">
    <location>
        <position position="163"/>
    </location>
</feature>
<feature type="modified residue" description="Phosphoserine" evidence="2">
    <location>
        <position position="644"/>
    </location>
</feature>
<feature type="modified residue" description="Phosphoserine" evidence="2">
    <location>
        <position position="646"/>
    </location>
</feature>
<accession>P0C5J9</accession>